<gene>
    <name type="ordered locus">COSY_0614</name>
</gene>
<dbReference type="EC" id="3.1.4.-" evidence="1"/>
<dbReference type="EMBL" id="AP009247">
    <property type="protein sequence ID" value="BAF61727.1"/>
    <property type="molecule type" value="Genomic_DNA"/>
</dbReference>
<dbReference type="RefSeq" id="WP_011929997.1">
    <property type="nucleotide sequence ID" value="NC_009465.1"/>
</dbReference>
<dbReference type="SMR" id="A5CWE4"/>
<dbReference type="STRING" id="412965.COSY_0614"/>
<dbReference type="KEGG" id="vok:COSY_0614"/>
<dbReference type="eggNOG" id="COG1409">
    <property type="taxonomic scope" value="Bacteria"/>
</dbReference>
<dbReference type="HOGENOM" id="CLU_070320_0_0_6"/>
<dbReference type="OrthoDB" id="9784378at2"/>
<dbReference type="Proteomes" id="UP000000247">
    <property type="component" value="Chromosome"/>
</dbReference>
<dbReference type="GO" id="GO:0004115">
    <property type="term" value="F:3',5'-cyclic-AMP phosphodiesterase activity"/>
    <property type="evidence" value="ECO:0007669"/>
    <property type="project" value="UniProtKB-EC"/>
</dbReference>
<dbReference type="GO" id="GO:0046872">
    <property type="term" value="F:metal ion binding"/>
    <property type="evidence" value="ECO:0007669"/>
    <property type="project" value="UniProtKB-KW"/>
</dbReference>
<dbReference type="GO" id="GO:0000166">
    <property type="term" value="F:nucleotide binding"/>
    <property type="evidence" value="ECO:0007669"/>
    <property type="project" value="UniProtKB-KW"/>
</dbReference>
<dbReference type="Gene3D" id="3.60.21.10">
    <property type="match status" value="1"/>
</dbReference>
<dbReference type="InterPro" id="IPR004843">
    <property type="entry name" value="Calcineurin-like_PHP_ApaH"/>
</dbReference>
<dbReference type="InterPro" id="IPR050884">
    <property type="entry name" value="CNP_phosphodiesterase-III"/>
</dbReference>
<dbReference type="InterPro" id="IPR029052">
    <property type="entry name" value="Metallo-depent_PP-like"/>
</dbReference>
<dbReference type="PANTHER" id="PTHR42988:SF2">
    <property type="entry name" value="CYCLIC NUCLEOTIDE PHOSPHODIESTERASE CBUA0032-RELATED"/>
    <property type="match status" value="1"/>
</dbReference>
<dbReference type="PANTHER" id="PTHR42988">
    <property type="entry name" value="PHOSPHOHYDROLASE"/>
    <property type="match status" value="1"/>
</dbReference>
<dbReference type="Pfam" id="PF00149">
    <property type="entry name" value="Metallophos"/>
    <property type="match status" value="1"/>
</dbReference>
<dbReference type="SUPFAM" id="SSF56300">
    <property type="entry name" value="Metallo-dependent phosphatases"/>
    <property type="match status" value="1"/>
</dbReference>
<keyword id="KW-0378">Hydrolase</keyword>
<keyword id="KW-0408">Iron</keyword>
<keyword id="KW-0479">Metal-binding</keyword>
<keyword id="KW-0547">Nucleotide-binding</keyword>
<keyword id="KW-1185">Reference proteome</keyword>
<proteinExistence type="inferred from homology"/>
<accession>A5CWE4</accession>
<evidence type="ECO:0000250" key="1">
    <source>
        <dbReference type="UniProtKB" id="P9WP65"/>
    </source>
</evidence>
<evidence type="ECO:0000250" key="2">
    <source>
        <dbReference type="UniProtKB" id="Q6XBH1"/>
    </source>
</evidence>
<evidence type="ECO:0000305" key="3"/>
<comment type="cofactor">
    <cofactor evidence="2">
        <name>Fe(2+)</name>
        <dbReference type="ChEBI" id="CHEBI:29033"/>
    </cofactor>
    <text evidence="2">Binds 2 Fe(2+) ions per subunit.</text>
</comment>
<comment type="similarity">
    <text evidence="3">Belongs to the cyclic nucleotide phosphodiesterase class-III family.</text>
</comment>
<organism>
    <name type="scientific">Vesicomyosocius okutanii subsp. Calyptogena okutanii (strain HA)</name>
    <dbReference type="NCBI Taxonomy" id="412965"/>
    <lineage>
        <taxon>Bacteria</taxon>
        <taxon>Pseudomonadati</taxon>
        <taxon>Pseudomonadota</taxon>
        <taxon>Gammaproteobacteria</taxon>
        <taxon>Candidatus Pseudothioglobaceae</taxon>
        <taxon>Candidatus Vesicomyosocius</taxon>
    </lineage>
</organism>
<name>CNPD3_VESOH</name>
<protein>
    <recommendedName>
        <fullName evidence="1">Probable cyclic nucleotide phosphodiesterase COSY_0614</fullName>
        <ecNumber evidence="1">3.1.4.-</ecNumber>
    </recommendedName>
</protein>
<feature type="chain" id="PRO_0000413382" description="Probable cyclic nucleotide phosphodiesterase COSY_0614">
    <location>
        <begin position="1"/>
        <end position="233"/>
    </location>
</feature>
<feature type="binding site" evidence="2">
    <location>
        <position position="10"/>
    </location>
    <ligand>
        <name>Fe cation</name>
        <dbReference type="ChEBI" id="CHEBI:24875"/>
        <label>1</label>
    </ligand>
</feature>
<feature type="binding site" evidence="1">
    <location>
        <position position="12"/>
    </location>
    <ligand>
        <name>AMP</name>
        <dbReference type="ChEBI" id="CHEBI:456215"/>
    </ligand>
</feature>
<feature type="binding site" evidence="2">
    <location>
        <position position="12"/>
    </location>
    <ligand>
        <name>Fe cation</name>
        <dbReference type="ChEBI" id="CHEBI:24875"/>
        <label>1</label>
    </ligand>
</feature>
<feature type="binding site" evidence="1">
    <location>
        <position position="48"/>
    </location>
    <ligand>
        <name>AMP</name>
        <dbReference type="ChEBI" id="CHEBI:456215"/>
    </ligand>
</feature>
<feature type="binding site" evidence="2">
    <location>
        <position position="48"/>
    </location>
    <ligand>
        <name>Fe cation</name>
        <dbReference type="ChEBI" id="CHEBI:24875"/>
        <label>1</label>
    </ligand>
</feature>
<feature type="binding site" evidence="2">
    <location>
        <position position="48"/>
    </location>
    <ligand>
        <name>Fe cation</name>
        <dbReference type="ChEBI" id="CHEBI:24875"/>
        <label>2</label>
    </ligand>
</feature>
<feature type="binding site" evidence="1">
    <location>
        <begin position="78"/>
        <end position="79"/>
    </location>
    <ligand>
        <name>AMP</name>
        <dbReference type="ChEBI" id="CHEBI:456215"/>
    </ligand>
</feature>
<feature type="binding site" evidence="2">
    <location>
        <position position="78"/>
    </location>
    <ligand>
        <name>Fe cation</name>
        <dbReference type="ChEBI" id="CHEBI:24875"/>
        <label>2</label>
    </ligand>
</feature>
<feature type="binding site" evidence="2">
    <location>
        <position position="144"/>
    </location>
    <ligand>
        <name>Fe cation</name>
        <dbReference type="ChEBI" id="CHEBI:24875"/>
        <label>2</label>
    </ligand>
</feature>
<feature type="binding site" evidence="2">
    <location>
        <position position="183"/>
    </location>
    <ligand>
        <name>Fe cation</name>
        <dbReference type="ChEBI" id="CHEBI:24875"/>
        <label>2</label>
    </ligand>
</feature>
<feature type="binding site" evidence="1">
    <location>
        <position position="185"/>
    </location>
    <ligand>
        <name>AMP</name>
        <dbReference type="ChEBI" id="CHEBI:456215"/>
    </ligand>
</feature>
<feature type="binding site" evidence="2">
    <location>
        <position position="185"/>
    </location>
    <ligand>
        <name>Fe cation</name>
        <dbReference type="ChEBI" id="CHEBI:24875"/>
        <label>1</label>
    </ligand>
</feature>
<reference key="1">
    <citation type="journal article" date="2007" name="Curr. Biol.">
        <title>Reduced genome of the thioautotrophic intracellular symbiont in a deep-sea clam, Calyptogena okutanii.</title>
        <authorList>
            <person name="Kuwahara H."/>
            <person name="Yoshida T."/>
            <person name="Takaki Y."/>
            <person name="Shimamura S."/>
            <person name="Nishi S."/>
            <person name="Harada M."/>
            <person name="Matsuyama K."/>
            <person name="Takishita K."/>
            <person name="Kawato M."/>
            <person name="Uematsu K."/>
            <person name="Fujiwara Y."/>
            <person name="Sato T."/>
            <person name="Kato C."/>
            <person name="Kitagawa M."/>
            <person name="Kato I."/>
            <person name="Maruyama T."/>
        </authorList>
    </citation>
    <scope>NUCLEOTIDE SEQUENCE [LARGE SCALE GENOMIC DNA]</scope>
    <source>
        <strain>HA</strain>
    </source>
</reference>
<sequence>MNYSLIQISDCHIDDNKYSMGVNTHINLKKIISRISHINIDVLLITGDLTHKGSITSYKALQQMLYPIQIKLLIIPGNHDNKNNLSATFSKNLFSQFTLGKWEIININSVQVSKTSGFLTKDELIKLELNLAQSIAQYILITLHHPTVPMNSTWDDSLSLENPEALFNVLDKYHKIQAILFGHAHQAAEFKRLGVKIISCPSTALQFNNETRIGFNYYTLYDNGQLTINTQWI</sequence>